<organism>
    <name type="scientific">Bacillus subtilis (strain 168)</name>
    <dbReference type="NCBI Taxonomy" id="224308"/>
    <lineage>
        <taxon>Bacteria</taxon>
        <taxon>Bacillati</taxon>
        <taxon>Bacillota</taxon>
        <taxon>Bacilli</taxon>
        <taxon>Bacillales</taxon>
        <taxon>Bacillaceae</taxon>
        <taxon>Bacillus</taxon>
    </lineage>
</organism>
<proteinExistence type="predicted"/>
<keyword id="KW-1185">Reference proteome</keyword>
<feature type="chain" id="PRO_0000049918" description="Uncharacterized protein YugE">
    <location>
        <begin position="1"/>
        <end position="86"/>
    </location>
</feature>
<dbReference type="EMBL" id="Z93934">
    <property type="protein sequence ID" value="CAB07917.1"/>
    <property type="status" value="ALT_INIT"/>
    <property type="molecule type" value="Genomic_DNA"/>
</dbReference>
<dbReference type="EMBL" id="AL009126">
    <property type="protein sequence ID" value="CAB15132.2"/>
    <property type="molecule type" value="Genomic_DNA"/>
</dbReference>
<dbReference type="PIR" id="D70010">
    <property type="entry name" value="D70010"/>
</dbReference>
<dbReference type="RefSeq" id="NP_391021.2">
    <property type="nucleotide sequence ID" value="NC_000964.3"/>
</dbReference>
<dbReference type="RefSeq" id="WP_003242594.1">
    <property type="nucleotide sequence ID" value="NZ_OZ025638.1"/>
</dbReference>
<dbReference type="SMR" id="O05234"/>
<dbReference type="FunCoup" id="O05234">
    <property type="interactions" value="295"/>
</dbReference>
<dbReference type="STRING" id="224308.BSU31430"/>
<dbReference type="PaxDb" id="224308-BSU31430"/>
<dbReference type="EnsemblBacteria" id="CAB15132">
    <property type="protein sequence ID" value="CAB15132"/>
    <property type="gene ID" value="BSU_31430"/>
</dbReference>
<dbReference type="GeneID" id="938847"/>
<dbReference type="KEGG" id="bsu:BSU31430"/>
<dbReference type="PATRIC" id="fig|224308.179.peg.3407"/>
<dbReference type="eggNOG" id="ENOG50334GP">
    <property type="taxonomic scope" value="Bacteria"/>
</dbReference>
<dbReference type="InParanoid" id="O05234"/>
<dbReference type="OrthoDB" id="2353632at2"/>
<dbReference type="BioCyc" id="BSUB:BSU31430-MONOMER"/>
<dbReference type="Proteomes" id="UP000001570">
    <property type="component" value="Chromosome"/>
</dbReference>
<dbReference type="Gene3D" id="1.10.340.20">
    <property type="entry name" value="Apc36109-like domain"/>
    <property type="match status" value="1"/>
</dbReference>
<dbReference type="InterPro" id="IPR023162">
    <property type="entry name" value="Apc36109-like_dom_sf"/>
</dbReference>
<dbReference type="InterPro" id="IPR015053">
    <property type="entry name" value="DUF1871"/>
</dbReference>
<dbReference type="Pfam" id="PF08958">
    <property type="entry name" value="DUF1871"/>
    <property type="match status" value="1"/>
</dbReference>
<dbReference type="SUPFAM" id="SSF116922">
    <property type="entry name" value="YugE-like"/>
    <property type="match status" value="1"/>
</dbReference>
<name>YUGE_BACSU</name>
<evidence type="ECO:0000305" key="1"/>
<protein>
    <recommendedName>
        <fullName>Uncharacterized protein YugE</fullName>
    </recommendedName>
</protein>
<reference key="1">
    <citation type="journal article" date="1997" name="Microbiology">
        <title>Analysis of the Bacillus subtilis genome: cloning and nucleotide sequence of a 62 kb region between 275 degrees (rrnB) and 284 degrees (pai).</title>
        <authorList>
            <person name="Oudega B."/>
            <person name="Koningstein G."/>
            <person name="Rodrigues L."/>
            <person name="de Sales Ramon M."/>
            <person name="Hilbert H."/>
            <person name="Duesterhoeft A."/>
            <person name="Pohl T.M."/>
            <person name="Weitzenegger T."/>
        </authorList>
    </citation>
    <scope>NUCLEOTIDE SEQUENCE [GENOMIC DNA]</scope>
    <source>
        <strain>168</strain>
    </source>
</reference>
<reference key="2">
    <citation type="journal article" date="1997" name="Nature">
        <title>The complete genome sequence of the Gram-positive bacterium Bacillus subtilis.</title>
        <authorList>
            <person name="Kunst F."/>
            <person name="Ogasawara N."/>
            <person name="Moszer I."/>
            <person name="Albertini A.M."/>
            <person name="Alloni G."/>
            <person name="Azevedo V."/>
            <person name="Bertero M.G."/>
            <person name="Bessieres P."/>
            <person name="Bolotin A."/>
            <person name="Borchert S."/>
            <person name="Borriss R."/>
            <person name="Boursier L."/>
            <person name="Brans A."/>
            <person name="Braun M."/>
            <person name="Brignell S.C."/>
            <person name="Bron S."/>
            <person name="Brouillet S."/>
            <person name="Bruschi C.V."/>
            <person name="Caldwell B."/>
            <person name="Capuano V."/>
            <person name="Carter N.M."/>
            <person name="Choi S.-K."/>
            <person name="Codani J.-J."/>
            <person name="Connerton I.F."/>
            <person name="Cummings N.J."/>
            <person name="Daniel R.A."/>
            <person name="Denizot F."/>
            <person name="Devine K.M."/>
            <person name="Duesterhoeft A."/>
            <person name="Ehrlich S.D."/>
            <person name="Emmerson P.T."/>
            <person name="Entian K.-D."/>
            <person name="Errington J."/>
            <person name="Fabret C."/>
            <person name="Ferrari E."/>
            <person name="Foulger D."/>
            <person name="Fritz C."/>
            <person name="Fujita M."/>
            <person name="Fujita Y."/>
            <person name="Fuma S."/>
            <person name="Galizzi A."/>
            <person name="Galleron N."/>
            <person name="Ghim S.-Y."/>
            <person name="Glaser P."/>
            <person name="Goffeau A."/>
            <person name="Golightly E.J."/>
            <person name="Grandi G."/>
            <person name="Guiseppi G."/>
            <person name="Guy B.J."/>
            <person name="Haga K."/>
            <person name="Haiech J."/>
            <person name="Harwood C.R."/>
            <person name="Henaut A."/>
            <person name="Hilbert H."/>
            <person name="Holsappel S."/>
            <person name="Hosono S."/>
            <person name="Hullo M.-F."/>
            <person name="Itaya M."/>
            <person name="Jones L.-M."/>
            <person name="Joris B."/>
            <person name="Karamata D."/>
            <person name="Kasahara Y."/>
            <person name="Klaerr-Blanchard M."/>
            <person name="Klein C."/>
            <person name="Kobayashi Y."/>
            <person name="Koetter P."/>
            <person name="Koningstein G."/>
            <person name="Krogh S."/>
            <person name="Kumano M."/>
            <person name="Kurita K."/>
            <person name="Lapidus A."/>
            <person name="Lardinois S."/>
            <person name="Lauber J."/>
            <person name="Lazarevic V."/>
            <person name="Lee S.-M."/>
            <person name="Levine A."/>
            <person name="Liu H."/>
            <person name="Masuda S."/>
            <person name="Mauel C."/>
            <person name="Medigue C."/>
            <person name="Medina N."/>
            <person name="Mellado R.P."/>
            <person name="Mizuno M."/>
            <person name="Moestl D."/>
            <person name="Nakai S."/>
            <person name="Noback M."/>
            <person name="Noone D."/>
            <person name="O'Reilly M."/>
            <person name="Ogawa K."/>
            <person name="Ogiwara A."/>
            <person name="Oudega B."/>
            <person name="Park S.-H."/>
            <person name="Parro V."/>
            <person name="Pohl T.M."/>
            <person name="Portetelle D."/>
            <person name="Porwollik S."/>
            <person name="Prescott A.M."/>
            <person name="Presecan E."/>
            <person name="Pujic P."/>
            <person name="Purnelle B."/>
            <person name="Rapoport G."/>
            <person name="Rey M."/>
            <person name="Reynolds S."/>
            <person name="Rieger M."/>
            <person name="Rivolta C."/>
            <person name="Rocha E."/>
            <person name="Roche B."/>
            <person name="Rose M."/>
            <person name="Sadaie Y."/>
            <person name="Sato T."/>
            <person name="Scanlan E."/>
            <person name="Schleich S."/>
            <person name="Schroeter R."/>
            <person name="Scoffone F."/>
            <person name="Sekiguchi J."/>
            <person name="Sekowska A."/>
            <person name="Seror S.J."/>
            <person name="Serror P."/>
            <person name="Shin B.-S."/>
            <person name="Soldo B."/>
            <person name="Sorokin A."/>
            <person name="Tacconi E."/>
            <person name="Takagi T."/>
            <person name="Takahashi H."/>
            <person name="Takemaru K."/>
            <person name="Takeuchi M."/>
            <person name="Tamakoshi A."/>
            <person name="Tanaka T."/>
            <person name="Terpstra P."/>
            <person name="Tognoni A."/>
            <person name="Tosato V."/>
            <person name="Uchiyama S."/>
            <person name="Vandenbol M."/>
            <person name="Vannier F."/>
            <person name="Vassarotti A."/>
            <person name="Viari A."/>
            <person name="Wambutt R."/>
            <person name="Wedler E."/>
            <person name="Wedler H."/>
            <person name="Weitzenegger T."/>
            <person name="Winters P."/>
            <person name="Wipat A."/>
            <person name="Yamamoto H."/>
            <person name="Yamane K."/>
            <person name="Yasumoto K."/>
            <person name="Yata K."/>
            <person name="Yoshida K."/>
            <person name="Yoshikawa H.-F."/>
            <person name="Zumstein E."/>
            <person name="Yoshikawa H."/>
            <person name="Danchin A."/>
        </authorList>
    </citation>
    <scope>NUCLEOTIDE SEQUENCE [LARGE SCALE GENOMIC DNA]</scope>
    <source>
        <strain>168</strain>
    </source>
</reference>
<comment type="sequence caution" evidence="1">
    <conflict type="erroneous initiation">
        <sequence resource="EMBL-CDS" id="CAB07917"/>
    </conflict>
</comment>
<accession>O05234</accession>
<gene>
    <name type="primary">yugE</name>
    <name type="ordered locus">BSU31430</name>
</gene>
<sequence>MEESHAVREMIKIIAKWDPFKYGEEFYETEAVDVVQAVYDENDPDLLAKSIQQIFETSFEQTLPIASCREVAGQLLFIKNSSSCTP</sequence>